<gene>
    <name evidence="8" type="primary">RPN3A</name>
    <name type="synonym">EMB2719</name>
    <name evidence="9" type="synonym">HAP15</name>
    <name evidence="11" type="ordered locus">At1g20200</name>
    <name evidence="12" type="ORF">T20H2.3</name>
</gene>
<sequence length="488" mass="55582">MTQDVEMKDNNTPSQSIISSSTSTMQNLKEIAALIDTGSYTKEVRRIARAVRLTIGLRQKLTGSVLSSFLDFALVPGSEAHSRLSSFVPKGDEHDMEVDTASSATQAAPSKHLPAELEIYCYFIVLLFLIDQKKYNEAKACSSASIARLKNVNRRTIDVIASRLYFYYSLSYEQTGDLAEIRGTLLALHHSATLRHDELGQETLLNLLLRNYLHYNLYDQAEKLRSKAPRFEAHSNQQFCRYLFYLGKIRTIQLEYTDAKESLLQAARKAPIAALGFRIQCNKWAILVRLLLGEIPERSIFTQKGMEKALRPYFELTNAVRIGDLELFRTVQEKFLDTFAQDRTHNLIVRLRHNVIRTGLRNISISYSRISLPDVAKKLRLNSENPVADAESIVAKAIRDGAIDATIDHKNGCMVSKETGDIYSTNEPQTAFNSRIAFCLNMHNEAVRALRFPPNTHKEKESDEKRRERKQQEEELAKHMAEEDDDDF</sequence>
<comment type="function">
    <text evidence="1">Acts as a regulatory subunit of the 26 proteasome which is involved in the ATP-dependent degradation of ubiquitinated proteins.</text>
</comment>
<comment type="subunit">
    <text evidence="4 6 7">Component of the 19S regulatory particle (RP/PA700) lid subcomplex of the 26S proteasome. The 26S proteasome is composed of a core protease (CP), known as the 20S proteasome, capped at one or both ends by the 19S regulatory particle (RP/PA700). The RP/PA700 complex is composed of at least 17 different subunits in two subcomplexes, the base and the lid, which form the portions proximal and distal to the 20S proteolytic core, respectively (PubMed:14623884, PubMed:20516081). Interacts with UCH1 and UCH2 (PubMed:22951400).</text>
</comment>
<comment type="tissue specificity">
    <text evidence="4">Ubiquitous with highest expression in flowers.</text>
</comment>
<comment type="disruption phenotype">
    <text evidence="5">Short pollen tube growth and failure to exit the style.</text>
</comment>
<comment type="similarity">
    <text evidence="10">Belongs to the proteasome subunit S3 family.</text>
</comment>
<comment type="sequence caution" evidence="10">
    <conflict type="erroneous gene model prediction">
        <sequence resource="EMBL-CDS" id="AAF79894"/>
    </conflict>
</comment>
<name>PSD3A_ARATH</name>
<reference key="1">
    <citation type="journal article" date="2004" name="J. Biol. Chem.">
        <title>Purification of the Arabidopsis 26 S proteasome: biochemical and molecular analyses revealed the presence of multiple isoforms.</title>
        <authorList>
            <person name="Yang P."/>
            <person name="Fu H."/>
            <person name="Walker J."/>
            <person name="Papa C.M."/>
            <person name="Smalle J."/>
            <person name="Ju Y.-M."/>
            <person name="Vierstra R.D."/>
        </authorList>
    </citation>
    <scope>NUCLEOTIDE SEQUENCE [MRNA]</scope>
    <scope>SUBUNIT</scope>
    <scope>IDENTIFICATION BY MASS SPECTROMETRY</scope>
    <scope>TISSUE SPECIFICITY</scope>
    <source>
        <strain>cv. Columbia</strain>
    </source>
</reference>
<reference key="2">
    <citation type="journal article" date="2000" name="Nature">
        <title>Sequence and analysis of chromosome 1 of the plant Arabidopsis thaliana.</title>
        <authorList>
            <person name="Theologis A."/>
            <person name="Ecker J.R."/>
            <person name="Palm C.J."/>
            <person name="Federspiel N.A."/>
            <person name="Kaul S."/>
            <person name="White O."/>
            <person name="Alonso J."/>
            <person name="Altafi H."/>
            <person name="Araujo R."/>
            <person name="Bowman C.L."/>
            <person name="Brooks S.Y."/>
            <person name="Buehler E."/>
            <person name="Chan A."/>
            <person name="Chao Q."/>
            <person name="Chen H."/>
            <person name="Cheuk R.F."/>
            <person name="Chin C.W."/>
            <person name="Chung M.K."/>
            <person name="Conn L."/>
            <person name="Conway A.B."/>
            <person name="Conway A.R."/>
            <person name="Creasy T.H."/>
            <person name="Dewar K."/>
            <person name="Dunn P."/>
            <person name="Etgu P."/>
            <person name="Feldblyum T.V."/>
            <person name="Feng J.-D."/>
            <person name="Fong B."/>
            <person name="Fujii C.Y."/>
            <person name="Gill J.E."/>
            <person name="Goldsmith A.D."/>
            <person name="Haas B."/>
            <person name="Hansen N.F."/>
            <person name="Hughes B."/>
            <person name="Huizar L."/>
            <person name="Hunter J.L."/>
            <person name="Jenkins J."/>
            <person name="Johnson-Hopson C."/>
            <person name="Khan S."/>
            <person name="Khaykin E."/>
            <person name="Kim C.J."/>
            <person name="Koo H.L."/>
            <person name="Kremenetskaia I."/>
            <person name="Kurtz D.B."/>
            <person name="Kwan A."/>
            <person name="Lam B."/>
            <person name="Langin-Hooper S."/>
            <person name="Lee A."/>
            <person name="Lee J.M."/>
            <person name="Lenz C.A."/>
            <person name="Li J.H."/>
            <person name="Li Y.-P."/>
            <person name="Lin X."/>
            <person name="Liu S.X."/>
            <person name="Liu Z.A."/>
            <person name="Luros J.S."/>
            <person name="Maiti R."/>
            <person name="Marziali A."/>
            <person name="Militscher J."/>
            <person name="Miranda M."/>
            <person name="Nguyen M."/>
            <person name="Nierman W.C."/>
            <person name="Osborne B.I."/>
            <person name="Pai G."/>
            <person name="Peterson J."/>
            <person name="Pham P.K."/>
            <person name="Rizzo M."/>
            <person name="Rooney T."/>
            <person name="Rowley D."/>
            <person name="Sakano H."/>
            <person name="Salzberg S.L."/>
            <person name="Schwartz J.R."/>
            <person name="Shinn P."/>
            <person name="Southwick A.M."/>
            <person name="Sun H."/>
            <person name="Tallon L.J."/>
            <person name="Tambunga G."/>
            <person name="Toriumi M.J."/>
            <person name="Town C.D."/>
            <person name="Utterback T."/>
            <person name="Van Aken S."/>
            <person name="Vaysberg M."/>
            <person name="Vysotskaia V.S."/>
            <person name="Walker M."/>
            <person name="Wu D."/>
            <person name="Yu G."/>
            <person name="Fraser C.M."/>
            <person name="Venter J.C."/>
            <person name="Davis R.W."/>
        </authorList>
    </citation>
    <scope>NUCLEOTIDE SEQUENCE [LARGE SCALE GENOMIC DNA]</scope>
    <source>
        <strain>cv. Columbia</strain>
    </source>
</reference>
<reference key="3">
    <citation type="journal article" date="2017" name="Plant J.">
        <title>Araport11: a complete reannotation of the Arabidopsis thaliana reference genome.</title>
        <authorList>
            <person name="Cheng C.Y."/>
            <person name="Krishnakumar V."/>
            <person name="Chan A.P."/>
            <person name="Thibaud-Nissen F."/>
            <person name="Schobel S."/>
            <person name="Town C.D."/>
        </authorList>
    </citation>
    <scope>GENOME REANNOTATION</scope>
    <source>
        <strain>cv. Columbia</strain>
    </source>
</reference>
<reference key="4">
    <citation type="journal article" date="2003" name="Science">
        <title>Empirical analysis of transcriptional activity in the Arabidopsis genome.</title>
        <authorList>
            <person name="Yamada K."/>
            <person name="Lim J."/>
            <person name="Dale J.M."/>
            <person name="Chen H."/>
            <person name="Shinn P."/>
            <person name="Palm C.J."/>
            <person name="Southwick A.M."/>
            <person name="Wu H.C."/>
            <person name="Kim C.J."/>
            <person name="Nguyen M."/>
            <person name="Pham P.K."/>
            <person name="Cheuk R.F."/>
            <person name="Karlin-Newmann G."/>
            <person name="Liu S.X."/>
            <person name="Lam B."/>
            <person name="Sakano H."/>
            <person name="Wu T."/>
            <person name="Yu G."/>
            <person name="Miranda M."/>
            <person name="Quach H.L."/>
            <person name="Tripp M."/>
            <person name="Chang C.H."/>
            <person name="Lee J.M."/>
            <person name="Toriumi M.J."/>
            <person name="Chan M.M."/>
            <person name="Tang C.C."/>
            <person name="Onodera C.S."/>
            <person name="Deng J.M."/>
            <person name="Akiyama K."/>
            <person name="Ansari Y."/>
            <person name="Arakawa T."/>
            <person name="Banh J."/>
            <person name="Banno F."/>
            <person name="Bowser L."/>
            <person name="Brooks S.Y."/>
            <person name="Carninci P."/>
            <person name="Chao Q."/>
            <person name="Choy N."/>
            <person name="Enju A."/>
            <person name="Goldsmith A.D."/>
            <person name="Gurjal M."/>
            <person name="Hansen N.F."/>
            <person name="Hayashizaki Y."/>
            <person name="Johnson-Hopson C."/>
            <person name="Hsuan V.W."/>
            <person name="Iida K."/>
            <person name="Karnes M."/>
            <person name="Khan S."/>
            <person name="Koesema E."/>
            <person name="Ishida J."/>
            <person name="Jiang P.X."/>
            <person name="Jones T."/>
            <person name="Kawai J."/>
            <person name="Kamiya A."/>
            <person name="Meyers C."/>
            <person name="Nakajima M."/>
            <person name="Narusaka M."/>
            <person name="Seki M."/>
            <person name="Sakurai T."/>
            <person name="Satou M."/>
            <person name="Tamse R."/>
            <person name="Vaysberg M."/>
            <person name="Wallender E.K."/>
            <person name="Wong C."/>
            <person name="Yamamura Y."/>
            <person name="Yuan S."/>
            <person name="Shinozaki K."/>
            <person name="Davis R.W."/>
            <person name="Theologis A."/>
            <person name="Ecker J.R."/>
        </authorList>
    </citation>
    <scope>NUCLEOTIDE SEQUENCE [LARGE SCALE MRNA]</scope>
    <source>
        <strain>cv. Columbia</strain>
    </source>
</reference>
<reference key="5">
    <citation type="journal article" date="2004" name="Genetics">
        <title>Arabidopsis hapless mutations define essential gametophytic functions.</title>
        <authorList>
            <person name="Johnson M.A."/>
            <person name="von Besser K."/>
            <person name="Zhou Q."/>
            <person name="Smith E."/>
            <person name="Aux G."/>
            <person name="Patton D."/>
            <person name="Levin J.Z."/>
            <person name="Preuss D."/>
        </authorList>
    </citation>
    <scope>DISRUPTION PHENOTYPE</scope>
</reference>
<reference key="6">
    <citation type="journal article" date="2010" name="J. Biol. Chem.">
        <title>Affinity purification of the Arabidopsis 26 S proteasome reveals a diverse array of plant proteolytic complexes.</title>
        <authorList>
            <person name="Book A.J."/>
            <person name="Gladman N.P."/>
            <person name="Lee S.S."/>
            <person name="Scalf M."/>
            <person name="Smith L.M."/>
            <person name="Vierstra R.D."/>
        </authorList>
    </citation>
    <scope>IDENTIFICATION BY MASS SPECTROMETRY</scope>
    <scope>CHARACTERIZATION OF THE 26S PROTEASOME COMPLEX</scope>
    <scope>SUBUNIT</scope>
</reference>
<reference key="7">
    <citation type="journal article" date="2012" name="Plant Signal. Behav.">
        <title>Evidence that the Arabidopsis Ubiquitin C-terminal Hydrolases 1 and 2 associate with the 26S proteasome and the TREX-2 complex.</title>
        <authorList>
            <person name="Tian G."/>
            <person name="Lu Q."/>
            <person name="Kohalmi S.E."/>
            <person name="Rothstein S.J."/>
            <person name="Cui Y."/>
        </authorList>
    </citation>
    <scope>INTERACTION WITH UCH1 AND UCH2</scope>
</reference>
<feature type="chain" id="PRO_0000173822" description="26S proteasome non-ATPase regulatory subunit 3 homolog A">
    <location>
        <begin position="1"/>
        <end position="488"/>
    </location>
</feature>
<feature type="domain" description="PCI" evidence="2">
    <location>
        <begin position="240"/>
        <end position="421"/>
    </location>
</feature>
<feature type="region of interest" description="Disordered" evidence="3">
    <location>
        <begin position="451"/>
        <end position="488"/>
    </location>
</feature>
<feature type="compositionally biased region" description="Basic and acidic residues" evidence="3">
    <location>
        <begin position="456"/>
        <end position="481"/>
    </location>
</feature>
<feature type="sequence conflict" description="In Ref. 4; AAM53298." evidence="10" ref="4">
    <original>K</original>
    <variation>E</variation>
    <location>
        <position position="90"/>
    </location>
</feature>
<protein>
    <recommendedName>
        <fullName evidence="8">26S proteasome non-ATPase regulatory subunit 3 homolog A</fullName>
    </recommendedName>
    <alternativeName>
        <fullName evidence="8">26S proteasome regulatory subunit RPN3a</fullName>
        <shortName evidence="8">AtRPN3a</shortName>
    </alternativeName>
    <alternativeName>
        <fullName>26S proteasome regulatory subunit S3 homolog A</fullName>
    </alternativeName>
    <alternativeName>
        <fullName>Protein EMBRYO DEFECTIVE 2719</fullName>
    </alternativeName>
    <alternativeName>
        <fullName evidence="9">Protein HAPLESS 15</fullName>
    </alternativeName>
</protein>
<accession>Q9LNU4</accession>
<accession>Q6EMB6</accession>
<accession>Q8L852</accession>
<dbReference type="EMBL" id="AY230831">
    <property type="protein sequence ID" value="AAP86658.1"/>
    <property type="molecule type" value="mRNA"/>
</dbReference>
<dbReference type="EMBL" id="AC022472">
    <property type="protein sequence ID" value="AAF79894.1"/>
    <property type="status" value="ALT_SEQ"/>
    <property type="molecule type" value="Genomic_DNA"/>
</dbReference>
<dbReference type="EMBL" id="CP002684">
    <property type="protein sequence ID" value="AEE29950.1"/>
    <property type="molecule type" value="Genomic_DNA"/>
</dbReference>
<dbReference type="EMBL" id="AY120740">
    <property type="protein sequence ID" value="AAM53298.1"/>
    <property type="molecule type" value="mRNA"/>
</dbReference>
<dbReference type="PIR" id="G86335">
    <property type="entry name" value="G86335"/>
</dbReference>
<dbReference type="RefSeq" id="NP_173447.1">
    <property type="nucleotide sequence ID" value="NM_101873.3"/>
</dbReference>
<dbReference type="SMR" id="Q9LNU4"/>
<dbReference type="BioGRID" id="23848">
    <property type="interactions" value="95"/>
</dbReference>
<dbReference type="FunCoup" id="Q9LNU4">
    <property type="interactions" value="5126"/>
</dbReference>
<dbReference type="IntAct" id="Q9LNU4">
    <property type="interactions" value="4"/>
</dbReference>
<dbReference type="STRING" id="3702.Q9LNU4"/>
<dbReference type="iPTMnet" id="Q9LNU4"/>
<dbReference type="PaxDb" id="3702-AT1G20200.1"/>
<dbReference type="ProteomicsDB" id="226007"/>
<dbReference type="EnsemblPlants" id="AT1G20200.1">
    <property type="protein sequence ID" value="AT1G20200.1"/>
    <property type="gene ID" value="AT1G20200"/>
</dbReference>
<dbReference type="GeneID" id="838609"/>
<dbReference type="Gramene" id="AT1G20200.1">
    <property type="protein sequence ID" value="AT1G20200.1"/>
    <property type="gene ID" value="AT1G20200"/>
</dbReference>
<dbReference type="KEGG" id="ath:AT1G20200"/>
<dbReference type="Araport" id="AT1G20200"/>
<dbReference type="TAIR" id="AT1G20200">
    <property type="gene designation" value="EMB2719"/>
</dbReference>
<dbReference type="eggNOG" id="KOG2581">
    <property type="taxonomic scope" value="Eukaryota"/>
</dbReference>
<dbReference type="HOGENOM" id="CLU_019858_1_0_1"/>
<dbReference type="InParanoid" id="Q9LNU4"/>
<dbReference type="OMA" id="ILRVHQH"/>
<dbReference type="OrthoDB" id="1713558at2759"/>
<dbReference type="PhylomeDB" id="Q9LNU4"/>
<dbReference type="CD-CODE" id="4299E36E">
    <property type="entry name" value="Nucleolus"/>
</dbReference>
<dbReference type="PRO" id="PR:Q9LNU4"/>
<dbReference type="Proteomes" id="UP000006548">
    <property type="component" value="Chromosome 1"/>
</dbReference>
<dbReference type="ExpressionAtlas" id="Q9LNU4">
    <property type="expression patterns" value="baseline and differential"/>
</dbReference>
<dbReference type="GO" id="GO:0005829">
    <property type="term" value="C:cytosol"/>
    <property type="evidence" value="ECO:0007005"/>
    <property type="project" value="TAIR"/>
</dbReference>
<dbReference type="GO" id="GO:0005634">
    <property type="term" value="C:nucleus"/>
    <property type="evidence" value="ECO:0007005"/>
    <property type="project" value="TAIR"/>
</dbReference>
<dbReference type="GO" id="GO:0009506">
    <property type="term" value="C:plasmodesma"/>
    <property type="evidence" value="ECO:0007005"/>
    <property type="project" value="TAIR"/>
</dbReference>
<dbReference type="GO" id="GO:0000502">
    <property type="term" value="C:proteasome complex"/>
    <property type="evidence" value="ECO:0000314"/>
    <property type="project" value="TAIR"/>
</dbReference>
<dbReference type="GO" id="GO:0030234">
    <property type="term" value="F:enzyme regulator activity"/>
    <property type="evidence" value="ECO:0007669"/>
    <property type="project" value="InterPro"/>
</dbReference>
<dbReference type="GO" id="GO:0042176">
    <property type="term" value="P:regulation of protein catabolic process"/>
    <property type="evidence" value="ECO:0007669"/>
    <property type="project" value="InterPro"/>
</dbReference>
<dbReference type="FunFam" id="1.25.40.570:FF:000017">
    <property type="entry name" value="26S proteasome non-ATPase regulatory subunit 3"/>
    <property type="match status" value="1"/>
</dbReference>
<dbReference type="Gene3D" id="1.25.40.570">
    <property type="match status" value="1"/>
</dbReference>
<dbReference type="InterPro" id="IPR013586">
    <property type="entry name" value="26S_Psome_reg_C"/>
</dbReference>
<dbReference type="InterPro" id="IPR050756">
    <property type="entry name" value="CSN3"/>
</dbReference>
<dbReference type="InterPro" id="IPR000717">
    <property type="entry name" value="PCI_dom"/>
</dbReference>
<dbReference type="InterPro" id="IPR036390">
    <property type="entry name" value="WH_DNA-bd_sf"/>
</dbReference>
<dbReference type="PANTHER" id="PTHR10758:SF2">
    <property type="entry name" value="26S PROTEASOME NON-ATPASE REGULATORY SUBUNIT 3"/>
    <property type="match status" value="1"/>
</dbReference>
<dbReference type="PANTHER" id="PTHR10758">
    <property type="entry name" value="26S PROTEASOME NON-ATPASE REGULATORY SUBUNIT 3/COP9 SIGNALOSOME COMPLEX SUBUNIT 3"/>
    <property type="match status" value="1"/>
</dbReference>
<dbReference type="Pfam" id="PF01399">
    <property type="entry name" value="PCI"/>
    <property type="match status" value="1"/>
</dbReference>
<dbReference type="Pfam" id="PF08375">
    <property type="entry name" value="Rpn3_C"/>
    <property type="match status" value="1"/>
</dbReference>
<dbReference type="SMART" id="SM00753">
    <property type="entry name" value="PAM"/>
    <property type="match status" value="1"/>
</dbReference>
<dbReference type="SMART" id="SM00088">
    <property type="entry name" value="PINT"/>
    <property type="match status" value="1"/>
</dbReference>
<dbReference type="SUPFAM" id="SSF46785">
    <property type="entry name" value="Winged helix' DNA-binding domain"/>
    <property type="match status" value="1"/>
</dbReference>
<dbReference type="PROSITE" id="PS50250">
    <property type="entry name" value="PCI"/>
    <property type="match status" value="1"/>
</dbReference>
<organism>
    <name type="scientific">Arabidopsis thaliana</name>
    <name type="common">Mouse-ear cress</name>
    <dbReference type="NCBI Taxonomy" id="3702"/>
    <lineage>
        <taxon>Eukaryota</taxon>
        <taxon>Viridiplantae</taxon>
        <taxon>Streptophyta</taxon>
        <taxon>Embryophyta</taxon>
        <taxon>Tracheophyta</taxon>
        <taxon>Spermatophyta</taxon>
        <taxon>Magnoliopsida</taxon>
        <taxon>eudicotyledons</taxon>
        <taxon>Gunneridae</taxon>
        <taxon>Pentapetalae</taxon>
        <taxon>rosids</taxon>
        <taxon>malvids</taxon>
        <taxon>Brassicales</taxon>
        <taxon>Brassicaceae</taxon>
        <taxon>Camelineae</taxon>
        <taxon>Arabidopsis</taxon>
    </lineage>
</organism>
<proteinExistence type="evidence at protein level"/>
<evidence type="ECO:0000250" key="1">
    <source>
        <dbReference type="UniProtKB" id="O43242"/>
    </source>
</evidence>
<evidence type="ECO:0000255" key="2">
    <source>
        <dbReference type="PROSITE-ProRule" id="PRU01185"/>
    </source>
</evidence>
<evidence type="ECO:0000256" key="3">
    <source>
        <dbReference type="SAM" id="MobiDB-lite"/>
    </source>
</evidence>
<evidence type="ECO:0000269" key="4">
    <source>
    </source>
</evidence>
<evidence type="ECO:0000269" key="5">
    <source>
    </source>
</evidence>
<evidence type="ECO:0000269" key="6">
    <source>
    </source>
</evidence>
<evidence type="ECO:0000269" key="7">
    <source>
    </source>
</evidence>
<evidence type="ECO:0000303" key="8">
    <source>
    </source>
</evidence>
<evidence type="ECO:0000303" key="9">
    <source>
    </source>
</evidence>
<evidence type="ECO:0000305" key="10"/>
<evidence type="ECO:0000312" key="11">
    <source>
        <dbReference type="Araport" id="AT1G20200"/>
    </source>
</evidence>
<evidence type="ECO:0000312" key="12">
    <source>
        <dbReference type="EMBL" id="AAF79894.1"/>
    </source>
</evidence>
<keyword id="KW-0647">Proteasome</keyword>
<keyword id="KW-1185">Reference proteome</keyword>